<evidence type="ECO:0000255" key="1">
    <source>
        <dbReference type="HAMAP-Rule" id="MF_00805"/>
    </source>
</evidence>
<comment type="function">
    <text evidence="1">Covalent carrier of the coenzyme of citrate lyase.</text>
</comment>
<comment type="subunit">
    <text evidence="1">Oligomer with a subunit composition of (alpha,beta,gamma)6.</text>
</comment>
<comment type="subcellular location">
    <subcellularLocation>
        <location evidence="1">Cytoplasm</location>
    </subcellularLocation>
</comment>
<comment type="similarity">
    <text evidence="1">Belongs to the CitD family.</text>
</comment>
<name>CITD_HAEIN</name>
<reference key="1">
    <citation type="journal article" date="1995" name="Science">
        <title>Whole-genome random sequencing and assembly of Haemophilus influenzae Rd.</title>
        <authorList>
            <person name="Fleischmann R.D."/>
            <person name="Adams M.D."/>
            <person name="White O."/>
            <person name="Clayton R.A."/>
            <person name="Kirkness E.F."/>
            <person name="Kerlavage A.R."/>
            <person name="Bult C.J."/>
            <person name="Tomb J.-F."/>
            <person name="Dougherty B.A."/>
            <person name="Merrick J.M."/>
            <person name="McKenney K."/>
            <person name="Sutton G.G."/>
            <person name="FitzHugh W."/>
            <person name="Fields C.A."/>
            <person name="Gocayne J.D."/>
            <person name="Scott J.D."/>
            <person name="Shirley R."/>
            <person name="Liu L.-I."/>
            <person name="Glodek A."/>
            <person name="Kelley J.M."/>
            <person name="Weidman J.F."/>
            <person name="Phillips C.A."/>
            <person name="Spriggs T."/>
            <person name="Hedblom E."/>
            <person name="Cotton M.D."/>
            <person name="Utterback T.R."/>
            <person name="Hanna M.C."/>
            <person name="Nguyen D.T."/>
            <person name="Saudek D.M."/>
            <person name="Brandon R.C."/>
            <person name="Fine L.D."/>
            <person name="Fritchman J.L."/>
            <person name="Fuhrmann J.L."/>
            <person name="Geoghagen N.S.M."/>
            <person name="Gnehm C.L."/>
            <person name="McDonald L.A."/>
            <person name="Small K.V."/>
            <person name="Fraser C.M."/>
            <person name="Smith H.O."/>
            <person name="Venter J.C."/>
        </authorList>
    </citation>
    <scope>NUCLEOTIDE SEQUENCE [LARGE SCALE GENOMIC DNA]</scope>
    <source>
        <strain>ATCC 51907 / DSM 11121 / KW20 / Rd</strain>
    </source>
</reference>
<organism>
    <name type="scientific">Haemophilus influenzae (strain ATCC 51907 / DSM 11121 / KW20 / Rd)</name>
    <dbReference type="NCBI Taxonomy" id="71421"/>
    <lineage>
        <taxon>Bacteria</taxon>
        <taxon>Pseudomonadati</taxon>
        <taxon>Pseudomonadota</taxon>
        <taxon>Gammaproteobacteria</taxon>
        <taxon>Pasteurellales</taxon>
        <taxon>Pasteurellaceae</taxon>
        <taxon>Haemophilus</taxon>
    </lineage>
</organism>
<proteinExistence type="inferred from homology"/>
<sequence>MKITKVAVAGTLESSDVQVRVQPFDSLDIEINSSVAKQFGEQIEATVREVLAKLGITAAQVIVEDKGALDCVLQARVKAAAMRATDEAINWEAVL</sequence>
<dbReference type="EMBL" id="L42023">
    <property type="protein sequence ID" value="AAC21702.1"/>
    <property type="molecule type" value="Genomic_DNA"/>
</dbReference>
<dbReference type="PIR" id="E64043">
    <property type="entry name" value="E64043"/>
</dbReference>
<dbReference type="RefSeq" id="NP_438197.1">
    <property type="nucleotide sequence ID" value="NC_000907.1"/>
</dbReference>
<dbReference type="SMR" id="P44461"/>
<dbReference type="STRING" id="71421.HI_0024"/>
<dbReference type="EnsemblBacteria" id="AAC21702">
    <property type="protein sequence ID" value="AAC21702"/>
    <property type="gene ID" value="HI_0024"/>
</dbReference>
<dbReference type="KEGG" id="hin:HI_0024"/>
<dbReference type="PATRIC" id="fig|71421.8.peg.24"/>
<dbReference type="eggNOG" id="COG3052">
    <property type="taxonomic scope" value="Bacteria"/>
</dbReference>
<dbReference type="HOGENOM" id="CLU_158489_0_0_6"/>
<dbReference type="OrthoDB" id="9798736at2"/>
<dbReference type="PhylomeDB" id="P44461"/>
<dbReference type="BioCyc" id="HINF71421:G1GJ1-24-MONOMER"/>
<dbReference type="Proteomes" id="UP000000579">
    <property type="component" value="Chromosome"/>
</dbReference>
<dbReference type="GO" id="GO:0005737">
    <property type="term" value="C:cytoplasm"/>
    <property type="evidence" value="ECO:0007669"/>
    <property type="project" value="UniProtKB-SubCell"/>
</dbReference>
<dbReference type="HAMAP" id="MF_00805">
    <property type="entry name" value="CitD"/>
    <property type="match status" value="1"/>
</dbReference>
<dbReference type="InterPro" id="IPR006495">
    <property type="entry name" value="CitD"/>
</dbReference>
<dbReference type="InterPro" id="IPR023439">
    <property type="entry name" value="Mal_deCO2ase/Cit_lyase_ACP"/>
</dbReference>
<dbReference type="NCBIfam" id="TIGR01608">
    <property type="entry name" value="citD"/>
    <property type="match status" value="1"/>
</dbReference>
<dbReference type="NCBIfam" id="NF009726">
    <property type="entry name" value="PRK13253.1"/>
    <property type="match status" value="1"/>
</dbReference>
<dbReference type="Pfam" id="PF06857">
    <property type="entry name" value="ACP"/>
    <property type="match status" value="1"/>
</dbReference>
<dbReference type="PIRSF" id="PIRSF002736">
    <property type="entry name" value="Citrt_lyas_gamma"/>
    <property type="match status" value="1"/>
</dbReference>
<keyword id="KW-0963">Cytoplasm</keyword>
<keyword id="KW-0597">Phosphoprotein</keyword>
<keyword id="KW-1185">Reference proteome</keyword>
<accession>P44461</accession>
<gene>
    <name evidence="1" type="primary">citD</name>
    <name type="ordered locus">HI_0024</name>
</gene>
<feature type="chain" id="PRO_0000214700" description="Citrate lyase acyl carrier protein">
    <location>
        <begin position="1"/>
        <end position="95"/>
    </location>
</feature>
<feature type="modified residue" description="O-(phosphoribosyl dephospho-coenzyme A)serine" evidence="1">
    <location>
        <position position="14"/>
    </location>
</feature>
<protein>
    <recommendedName>
        <fullName evidence="1">Citrate lyase acyl carrier protein</fullName>
    </recommendedName>
    <alternativeName>
        <fullName evidence="1">Citrate lyase gamma chain</fullName>
    </alternativeName>
</protein>